<protein>
    <recommendedName>
        <fullName evidence="1">NAD(P)H-quinone oxidoreductase subunit H</fullName>
        <ecNumber evidence="1">7.1.1.-</ecNumber>
    </recommendedName>
    <alternativeName>
        <fullName>NAD(P)H dehydrogenase subunit H</fullName>
    </alternativeName>
    <alternativeName>
        <fullName evidence="1">NADH-plastoquinone oxidoreductase subunit H</fullName>
    </alternativeName>
    <alternativeName>
        <fullName evidence="1">NDH-1 subunit H</fullName>
        <shortName evidence="1">NDH-H</shortName>
    </alternativeName>
</protein>
<feature type="chain" id="PRO_0000371916" description="NAD(P)H-quinone oxidoreductase subunit H">
    <location>
        <begin position="1"/>
        <end position="395"/>
    </location>
</feature>
<sequence length="395" mass="45242">MAQLETRTEPMVVNFGPHHPSMHGVLRLVVTLDGENVIDCEPVIGYLHRGMEKIAENRTNVMYVPYVSRMDYAAGMFYEAIVVNAPERLANIVVPKRASYIRVLMLELNRIANHLLWLGPFLADVGAQTPFFYIFREREMIYDLWEAATGQRLINNNFFRIGGVACDLPYGWLEKCIDFCDWFAPKIDEYEKLITNNPIFKKRIEGLGTIERDQAINWSLSGPMLRASGVSWDLRKVDSYECYDDFEWEIASEKEGDCYARYRVRVQEMRQSLKIIRQACEMIPGGPTENLEAKRMATEDKKSEIFGMDYQYVAKKVAPTFKIPNGELYTRLESGKGEIGVFIQGNNEVTPWRFKIRAADLNNLQILPHILKGAKIADIMAILGSIDVIMGSVDR</sequence>
<organism>
    <name type="scientific">Prochlorococcus marinus subsp. pastoris (strain CCMP1986 / NIES-2087 / MED4)</name>
    <dbReference type="NCBI Taxonomy" id="59919"/>
    <lineage>
        <taxon>Bacteria</taxon>
        <taxon>Bacillati</taxon>
        <taxon>Cyanobacteriota</taxon>
        <taxon>Cyanophyceae</taxon>
        <taxon>Synechococcales</taxon>
        <taxon>Prochlorococcaceae</taxon>
        <taxon>Prochlorococcus</taxon>
    </lineage>
</organism>
<name>NDHH_PROMP</name>
<gene>
    <name evidence="1" type="primary">ndhH</name>
    <name type="ordered locus">PMM0172</name>
</gene>
<proteinExistence type="inferred from homology"/>
<accession>Q7V3B0</accession>
<dbReference type="EC" id="7.1.1.-" evidence="1"/>
<dbReference type="EMBL" id="BX548174">
    <property type="protein sequence ID" value="CAE18631.1"/>
    <property type="molecule type" value="Genomic_DNA"/>
</dbReference>
<dbReference type="RefSeq" id="WP_011131811.1">
    <property type="nucleotide sequence ID" value="NC_005072.1"/>
</dbReference>
<dbReference type="SMR" id="Q7V3B0"/>
<dbReference type="STRING" id="59919.PMM0172"/>
<dbReference type="KEGG" id="pmm:PMM0172"/>
<dbReference type="eggNOG" id="COG0649">
    <property type="taxonomic scope" value="Bacteria"/>
</dbReference>
<dbReference type="HOGENOM" id="CLU_015134_1_2_3"/>
<dbReference type="OrthoDB" id="9801496at2"/>
<dbReference type="Proteomes" id="UP000001026">
    <property type="component" value="Chromosome"/>
</dbReference>
<dbReference type="GO" id="GO:0031676">
    <property type="term" value="C:plasma membrane-derived thylakoid membrane"/>
    <property type="evidence" value="ECO:0007669"/>
    <property type="project" value="UniProtKB-SubCell"/>
</dbReference>
<dbReference type="GO" id="GO:0051287">
    <property type="term" value="F:NAD binding"/>
    <property type="evidence" value="ECO:0007669"/>
    <property type="project" value="InterPro"/>
</dbReference>
<dbReference type="GO" id="GO:0016655">
    <property type="term" value="F:oxidoreductase activity, acting on NAD(P)H, quinone or similar compound as acceptor"/>
    <property type="evidence" value="ECO:0007669"/>
    <property type="project" value="UniProtKB-UniRule"/>
</dbReference>
<dbReference type="GO" id="GO:0048038">
    <property type="term" value="F:quinone binding"/>
    <property type="evidence" value="ECO:0007669"/>
    <property type="project" value="UniProtKB-KW"/>
</dbReference>
<dbReference type="GO" id="GO:0019684">
    <property type="term" value="P:photosynthesis, light reaction"/>
    <property type="evidence" value="ECO:0007669"/>
    <property type="project" value="UniProtKB-UniRule"/>
</dbReference>
<dbReference type="Gene3D" id="1.10.645.10">
    <property type="entry name" value="Cytochrome-c3 Hydrogenase, chain B"/>
    <property type="match status" value="1"/>
</dbReference>
<dbReference type="HAMAP" id="MF_01358">
    <property type="entry name" value="NDH1_NuoD"/>
    <property type="match status" value="1"/>
</dbReference>
<dbReference type="InterPro" id="IPR001135">
    <property type="entry name" value="NADH_Q_OxRdtase_suD"/>
</dbReference>
<dbReference type="InterPro" id="IPR014029">
    <property type="entry name" value="NADH_UbQ_OxRdtase_49kDa_CS"/>
</dbReference>
<dbReference type="InterPro" id="IPR022885">
    <property type="entry name" value="NDH1_su_D/H"/>
</dbReference>
<dbReference type="InterPro" id="IPR029014">
    <property type="entry name" value="NiFe-Hase_large"/>
</dbReference>
<dbReference type="NCBIfam" id="NF004739">
    <property type="entry name" value="PRK06075.1"/>
    <property type="match status" value="1"/>
</dbReference>
<dbReference type="NCBIfam" id="NF005649">
    <property type="entry name" value="PRK07415.1"/>
    <property type="match status" value="1"/>
</dbReference>
<dbReference type="PANTHER" id="PTHR11993:SF10">
    <property type="entry name" value="NADH DEHYDROGENASE [UBIQUINONE] IRON-SULFUR PROTEIN 2, MITOCHONDRIAL"/>
    <property type="match status" value="1"/>
</dbReference>
<dbReference type="PANTHER" id="PTHR11993">
    <property type="entry name" value="NADH-UBIQUINONE OXIDOREDUCTASE 49 KDA SUBUNIT"/>
    <property type="match status" value="1"/>
</dbReference>
<dbReference type="Pfam" id="PF00346">
    <property type="entry name" value="Complex1_49kDa"/>
    <property type="match status" value="1"/>
</dbReference>
<dbReference type="SUPFAM" id="SSF56762">
    <property type="entry name" value="HydB/Nqo4-like"/>
    <property type="match status" value="1"/>
</dbReference>
<dbReference type="PROSITE" id="PS00535">
    <property type="entry name" value="COMPLEX1_49K"/>
    <property type="match status" value="1"/>
</dbReference>
<comment type="function">
    <text evidence="1">NDH-1 shuttles electrons from an unknown electron donor, via FMN and iron-sulfur (Fe-S) centers, to quinones in the respiratory and/or the photosynthetic chain. The immediate electron acceptor for the enzyme in this species is believed to be plastoquinone. Couples the redox reaction to proton translocation, and thus conserves the redox energy in a proton gradient. Cyanobacterial NDH-1 also plays a role in inorganic carbon-concentration.</text>
</comment>
<comment type="catalytic activity">
    <reaction evidence="1">
        <text>a plastoquinone + NADH + (n+1) H(+)(in) = a plastoquinol + NAD(+) + n H(+)(out)</text>
        <dbReference type="Rhea" id="RHEA:42608"/>
        <dbReference type="Rhea" id="RHEA-COMP:9561"/>
        <dbReference type="Rhea" id="RHEA-COMP:9562"/>
        <dbReference type="ChEBI" id="CHEBI:15378"/>
        <dbReference type="ChEBI" id="CHEBI:17757"/>
        <dbReference type="ChEBI" id="CHEBI:57540"/>
        <dbReference type="ChEBI" id="CHEBI:57945"/>
        <dbReference type="ChEBI" id="CHEBI:62192"/>
    </reaction>
</comment>
<comment type="catalytic activity">
    <reaction evidence="1">
        <text>a plastoquinone + NADPH + (n+1) H(+)(in) = a plastoquinol + NADP(+) + n H(+)(out)</text>
        <dbReference type="Rhea" id="RHEA:42612"/>
        <dbReference type="Rhea" id="RHEA-COMP:9561"/>
        <dbReference type="Rhea" id="RHEA-COMP:9562"/>
        <dbReference type="ChEBI" id="CHEBI:15378"/>
        <dbReference type="ChEBI" id="CHEBI:17757"/>
        <dbReference type="ChEBI" id="CHEBI:57783"/>
        <dbReference type="ChEBI" id="CHEBI:58349"/>
        <dbReference type="ChEBI" id="CHEBI:62192"/>
    </reaction>
</comment>
<comment type="subunit">
    <text evidence="1">NDH-1 can be composed of about 15 different subunits; different subcomplexes with different compositions have been identified which probably have different functions.</text>
</comment>
<comment type="subcellular location">
    <subcellularLocation>
        <location evidence="1">Cellular thylakoid membrane</location>
        <topology evidence="1">Peripheral membrane protein</topology>
        <orientation evidence="1">Cytoplasmic side</orientation>
    </subcellularLocation>
</comment>
<comment type="similarity">
    <text evidence="1">Belongs to the complex I 49 kDa subunit family.</text>
</comment>
<reference key="1">
    <citation type="journal article" date="2003" name="Nature">
        <title>Genome divergence in two Prochlorococcus ecotypes reflects oceanic niche differentiation.</title>
        <authorList>
            <person name="Rocap G."/>
            <person name="Larimer F.W."/>
            <person name="Lamerdin J.E."/>
            <person name="Malfatti S."/>
            <person name="Chain P."/>
            <person name="Ahlgren N.A."/>
            <person name="Arellano A."/>
            <person name="Coleman M."/>
            <person name="Hauser L."/>
            <person name="Hess W.R."/>
            <person name="Johnson Z.I."/>
            <person name="Land M.L."/>
            <person name="Lindell D."/>
            <person name="Post A.F."/>
            <person name="Regala W."/>
            <person name="Shah M."/>
            <person name="Shaw S.L."/>
            <person name="Steglich C."/>
            <person name="Sullivan M.B."/>
            <person name="Ting C.S."/>
            <person name="Tolonen A."/>
            <person name="Webb E.A."/>
            <person name="Zinser E.R."/>
            <person name="Chisholm S.W."/>
        </authorList>
    </citation>
    <scope>NUCLEOTIDE SEQUENCE [LARGE SCALE GENOMIC DNA]</scope>
    <source>
        <strain>CCMP1986 / NIES-2087 / MED4</strain>
    </source>
</reference>
<keyword id="KW-0472">Membrane</keyword>
<keyword id="KW-0520">NAD</keyword>
<keyword id="KW-0521">NADP</keyword>
<keyword id="KW-0618">Plastoquinone</keyword>
<keyword id="KW-0874">Quinone</keyword>
<keyword id="KW-0793">Thylakoid</keyword>
<keyword id="KW-1278">Translocase</keyword>
<keyword id="KW-0813">Transport</keyword>
<evidence type="ECO:0000255" key="1">
    <source>
        <dbReference type="HAMAP-Rule" id="MF_01358"/>
    </source>
</evidence>